<reference key="1">
    <citation type="journal article" date="1997" name="J. Anim. Sci.">
        <title>Nucleotide sequence of bovine C/EBP delta gene.</title>
        <authorList>
            <person name="Taniguchi Y."/>
            <person name="Sasaki Y."/>
        </authorList>
    </citation>
    <scope>NUCLEOTIDE SEQUENCE [GENOMIC DNA]</scope>
    <source>
        <strain>Japanese black</strain>
    </source>
</reference>
<reference key="2">
    <citation type="submission" date="2007-02" db="EMBL/GenBank/DDBJ databases">
        <authorList>
            <consortium name="NIH - Mammalian Gene Collection (MGC) project"/>
        </authorList>
    </citation>
    <scope>NUCLEOTIDE SEQUENCE [LARGE SCALE MRNA]</scope>
    <source>
        <strain>Crossbred X Angus</strain>
        <tissue>Ileum</tissue>
    </source>
</reference>
<feature type="initiator methionine" description="Removed" evidence="2">
    <location>
        <position position="1"/>
    </location>
</feature>
<feature type="chain" id="PRO_0000310863" description="CCAAT/enhancer-binding protein delta">
    <location>
        <begin position="2"/>
        <end position="256"/>
    </location>
</feature>
<feature type="domain" description="bZIP" evidence="4">
    <location>
        <begin position="178"/>
        <end position="241"/>
    </location>
</feature>
<feature type="region of interest" description="Disordered" evidence="5">
    <location>
        <begin position="18"/>
        <end position="40"/>
    </location>
</feature>
<feature type="region of interest" description="Disordered" evidence="5">
    <location>
        <begin position="92"/>
        <end position="121"/>
    </location>
</feature>
<feature type="region of interest" description="Disordered" evidence="5">
    <location>
        <begin position="139"/>
        <end position="206"/>
    </location>
</feature>
<feature type="region of interest" description="Basic motif" evidence="4">
    <location>
        <begin position="182"/>
        <end position="209"/>
    </location>
</feature>
<feature type="region of interest" description="Leucine-zipper" evidence="4">
    <location>
        <begin position="213"/>
        <end position="241"/>
    </location>
</feature>
<feature type="compositionally biased region" description="Pro residues" evidence="5">
    <location>
        <begin position="143"/>
        <end position="162"/>
    </location>
</feature>
<feature type="compositionally biased region" description="Basic and acidic residues" evidence="5">
    <location>
        <begin position="164"/>
        <end position="188"/>
    </location>
</feature>
<feature type="modified residue" description="N-acetylserine" evidence="2">
    <location>
        <position position="2"/>
    </location>
</feature>
<feature type="cross-link" description="Glycyl lysine isopeptide (Lys-Gly) (interchain with G-Cter in SUMO)" evidence="1">
    <location>
        <position position="108"/>
    </location>
</feature>
<feature type="sequence conflict" description="In Ref. 2; AAI33582." evidence="6" ref="2">
    <original>S</original>
    <variation>G</variation>
    <location>
        <position position="178"/>
    </location>
</feature>
<proteinExistence type="evidence at transcript level"/>
<name>CEBPD_BOVIN</name>
<protein>
    <recommendedName>
        <fullName>CCAAT/enhancer-binding protein delta</fullName>
        <shortName>C/EBP delta</shortName>
    </recommendedName>
</protein>
<accession>O02756</accession>
<accession>A3KN42</accession>
<organism>
    <name type="scientific">Bos taurus</name>
    <name type="common">Bovine</name>
    <dbReference type="NCBI Taxonomy" id="9913"/>
    <lineage>
        <taxon>Eukaryota</taxon>
        <taxon>Metazoa</taxon>
        <taxon>Chordata</taxon>
        <taxon>Craniata</taxon>
        <taxon>Vertebrata</taxon>
        <taxon>Euteleostomi</taxon>
        <taxon>Mammalia</taxon>
        <taxon>Eutheria</taxon>
        <taxon>Laurasiatheria</taxon>
        <taxon>Artiodactyla</taxon>
        <taxon>Ruminantia</taxon>
        <taxon>Pecora</taxon>
        <taxon>Bovidae</taxon>
        <taxon>Bovinae</taxon>
        <taxon>Bos</taxon>
    </lineage>
</organism>
<keyword id="KW-0007">Acetylation</keyword>
<keyword id="KW-0010">Activator</keyword>
<keyword id="KW-0238">DNA-binding</keyword>
<keyword id="KW-1017">Isopeptide bond</keyword>
<keyword id="KW-0539">Nucleus</keyword>
<keyword id="KW-1185">Reference proteome</keyword>
<keyword id="KW-0804">Transcription</keyword>
<keyword id="KW-0805">Transcription regulation</keyword>
<keyword id="KW-0832">Ubl conjugation</keyword>
<sequence length="256" mass="27137">MSAALFSLDGPARGAPWTAEPAAFYEPGRAGKPGRGAEPAASAMYDDESAIDFSAYIDSMAAVPTLELCHDELFADLFNSNHKAGALELLPGGPARLGGPGPAPRPLKREPDWGDGDAPGSLLPAQVAACAQTVVSLAAAAQPTPPASPEPPRRSPAPPAPGPARDKAAGKRGPDRGSPEYRQRRERNNIAVRKSRDKAKRRNQEMQQKLVELSAENEKLQQRVEQLTRDLAGLRRFFKQLPGAPFLPGAGAADAR</sequence>
<dbReference type="EMBL" id="D82986">
    <property type="protein sequence ID" value="BAA20097.1"/>
    <property type="molecule type" value="Genomic_DNA"/>
</dbReference>
<dbReference type="EMBL" id="BC133581">
    <property type="protein sequence ID" value="AAI33582.1"/>
    <property type="molecule type" value="mRNA"/>
</dbReference>
<dbReference type="RefSeq" id="NP_776692.2">
    <property type="nucleotide sequence ID" value="NM_174267.2"/>
</dbReference>
<dbReference type="SMR" id="O02756"/>
<dbReference type="FunCoup" id="O02756">
    <property type="interactions" value="86"/>
</dbReference>
<dbReference type="STRING" id="9913.ENSBTAP00000070327"/>
<dbReference type="Ensembl" id="ENSBTAT00000095120.1">
    <property type="protein sequence ID" value="ENSBTAP00000082818.1"/>
    <property type="gene ID" value="ENSBTAG00000046307.3"/>
</dbReference>
<dbReference type="Ensembl" id="ENSBTAT00000124558.1">
    <property type="protein sequence ID" value="ENSBTAP00000095464.1"/>
    <property type="gene ID" value="ENSBTAG00000046307.3"/>
</dbReference>
<dbReference type="GeneID" id="281678"/>
<dbReference type="KEGG" id="bta:281678"/>
<dbReference type="CTD" id="1052"/>
<dbReference type="VEuPathDB" id="HostDB:ENSBTAG00000046307"/>
<dbReference type="VGNC" id="VGNC:106685">
    <property type="gene designation" value="CEBPD"/>
</dbReference>
<dbReference type="GeneTree" id="ENSGT00940000163032"/>
<dbReference type="InParanoid" id="O02756"/>
<dbReference type="OMA" id="RRNMEMQ"/>
<dbReference type="OrthoDB" id="10032067at2759"/>
<dbReference type="Proteomes" id="UP000009136">
    <property type="component" value="Chromosome 14"/>
</dbReference>
<dbReference type="Bgee" id="ENSBTAG00000046307">
    <property type="expression patterns" value="Expressed in ureter and 100 other cell types or tissues"/>
</dbReference>
<dbReference type="GO" id="GO:0005634">
    <property type="term" value="C:nucleus"/>
    <property type="evidence" value="ECO:0007669"/>
    <property type="project" value="UniProtKB-SubCell"/>
</dbReference>
<dbReference type="GO" id="GO:0000981">
    <property type="term" value="F:DNA-binding transcription factor activity, RNA polymerase II-specific"/>
    <property type="evidence" value="ECO:0000318"/>
    <property type="project" value="GO_Central"/>
</dbReference>
<dbReference type="GO" id="GO:0000978">
    <property type="term" value="F:RNA polymerase II cis-regulatory region sequence-specific DNA binding"/>
    <property type="evidence" value="ECO:0000318"/>
    <property type="project" value="GO_Central"/>
</dbReference>
<dbReference type="GO" id="GO:0006351">
    <property type="term" value="P:DNA-templated transcription"/>
    <property type="evidence" value="ECO:0007669"/>
    <property type="project" value="InterPro"/>
</dbReference>
<dbReference type="GO" id="GO:0045595">
    <property type="term" value="P:regulation of cell differentiation"/>
    <property type="evidence" value="ECO:0000318"/>
    <property type="project" value="GO_Central"/>
</dbReference>
<dbReference type="GO" id="GO:0006357">
    <property type="term" value="P:regulation of transcription by RNA polymerase II"/>
    <property type="evidence" value="ECO:0000318"/>
    <property type="project" value="GO_Central"/>
</dbReference>
<dbReference type="CDD" id="cd14714">
    <property type="entry name" value="bZIP_CEBPD"/>
    <property type="match status" value="1"/>
</dbReference>
<dbReference type="FunFam" id="1.20.5.170:FF:000028">
    <property type="entry name" value="CCAAT/enhancer-binding protein beta"/>
    <property type="match status" value="1"/>
</dbReference>
<dbReference type="Gene3D" id="1.20.5.170">
    <property type="match status" value="1"/>
</dbReference>
<dbReference type="InterPro" id="IPR004827">
    <property type="entry name" value="bZIP"/>
</dbReference>
<dbReference type="InterPro" id="IPR046347">
    <property type="entry name" value="bZIP_sf"/>
</dbReference>
<dbReference type="InterPro" id="IPR031106">
    <property type="entry name" value="C/EBP"/>
</dbReference>
<dbReference type="InterPro" id="IPR016468">
    <property type="entry name" value="C/EBP_chordates"/>
</dbReference>
<dbReference type="PANTHER" id="PTHR23334">
    <property type="entry name" value="CCAAT/ENHANCER BINDING PROTEIN"/>
    <property type="match status" value="1"/>
</dbReference>
<dbReference type="PANTHER" id="PTHR23334:SF3">
    <property type="entry name" value="CCAAT_ENHANCER-BINDING PROTEIN DELTA"/>
    <property type="match status" value="1"/>
</dbReference>
<dbReference type="Pfam" id="PF07716">
    <property type="entry name" value="bZIP_2"/>
    <property type="match status" value="1"/>
</dbReference>
<dbReference type="PIRSF" id="PIRSF005879">
    <property type="entry name" value="CCAAT/enhancer-binding"/>
    <property type="match status" value="1"/>
</dbReference>
<dbReference type="SMART" id="SM00338">
    <property type="entry name" value="BRLZ"/>
    <property type="match status" value="1"/>
</dbReference>
<dbReference type="SUPFAM" id="SSF57959">
    <property type="entry name" value="Leucine zipper domain"/>
    <property type="match status" value="1"/>
</dbReference>
<dbReference type="PROSITE" id="PS50217">
    <property type="entry name" value="BZIP"/>
    <property type="match status" value="1"/>
</dbReference>
<comment type="function">
    <text evidence="2">Transcription activator that recognizes two different DNA motifs: the CCAAT homology common to many promoters and the enhanced core homology common to many enhancers. Important transcription factor regulating the expression of genes involved in immune and inflammatory responses. Transcriptional activator that enhances IL6 transcription alone and as heterodimer with CEBPB.</text>
</comment>
<comment type="subunit">
    <text evidence="2 3">Binds DNA as a homodimer and as a heterodimer. Can form stable heterodimers with CEBPB. Can form stable heterodimers with CEBPA and CEBPE. Directly interacts with SPI1/PU.1; this interaction does not affect DNA-binding properties of each partner. Interacts with PRDM16.</text>
</comment>
<comment type="subcellular location">
    <subcellularLocation>
        <location evidence="4">Nucleus</location>
    </subcellularLocation>
</comment>
<comment type="similarity">
    <text evidence="6">Belongs to the bZIP family. C/EBP subfamily.</text>
</comment>
<gene>
    <name type="primary">CEBPD</name>
</gene>
<evidence type="ECO:0000250" key="1"/>
<evidence type="ECO:0000250" key="2">
    <source>
        <dbReference type="UniProtKB" id="P49716"/>
    </source>
</evidence>
<evidence type="ECO:0000250" key="3">
    <source>
        <dbReference type="UniProtKB" id="Q00322"/>
    </source>
</evidence>
<evidence type="ECO:0000255" key="4">
    <source>
        <dbReference type="PROSITE-ProRule" id="PRU00978"/>
    </source>
</evidence>
<evidence type="ECO:0000256" key="5">
    <source>
        <dbReference type="SAM" id="MobiDB-lite"/>
    </source>
</evidence>
<evidence type="ECO:0000305" key="6"/>